<sequence length="332" mass="37228">MSSDDLSLYFNEIVNNVNFRIKNFVKSNFKTLEEASFHLFTAGGKRLRPLVLVSSSDLIGGDRERAYKAAAAVEILHNFTLVHDDIMDNDGLRRGLPTVHVKWGEPMAILAGDYLHAKAFEALNEALKGLDGNTFYKAFSIFITSIEIISEGQAMDMSFENRLDVTEEEYIQMIKGKTAMLFSCSAALGGIINKANDDVVKKLTEYGLNLGISFQIVDDILGIIGDEKELGKPIYSDIREGKKTILVIKTLSEATEDEKKILVSTLGNKEAKKEDLERASEIIRKHSLQYAYDLAKKYSDLAIENLREIPVSNKTAEKALKYLAQFTIQRRK</sequence>
<gene>
    <name type="primary">gds</name>
    <name type="synonym">gds-1</name>
    <name type="ordered locus">SSO0061</name>
    <name type="ORF">C05010</name>
    <name type="ORF">C05_049</name>
</gene>
<evidence type="ECO:0000250" key="1"/>
<evidence type="ECO:0000250" key="2">
    <source>
        <dbReference type="UniProtKB" id="P14324"/>
    </source>
</evidence>
<evidence type="ECO:0000250" key="3">
    <source>
        <dbReference type="UniProtKB" id="Q12051"/>
    </source>
</evidence>
<evidence type="ECO:0000305" key="4"/>
<organism>
    <name type="scientific">Saccharolobus solfataricus (strain ATCC 35092 / DSM 1617 / JCM 11322 / P2)</name>
    <name type="common">Sulfolobus solfataricus</name>
    <dbReference type="NCBI Taxonomy" id="273057"/>
    <lineage>
        <taxon>Archaea</taxon>
        <taxon>Thermoproteota</taxon>
        <taxon>Thermoprotei</taxon>
        <taxon>Sulfolobales</taxon>
        <taxon>Sulfolobaceae</taxon>
        <taxon>Saccharolobus</taxon>
    </lineage>
</organism>
<protein>
    <recommendedName>
        <fullName>Geranylgeranyl diphosphate synthase</fullName>
        <shortName>GGPP synthase</shortName>
        <shortName>GGPS</shortName>
        <ecNumber>2.5.1.29</ecNumber>
    </recommendedName>
</protein>
<reference key="1">
    <citation type="journal article" date="1996" name="Mol. Microbiol.">
        <title>Organizational characteristics and information content of an archaeal genome: 156 kb of sequence from Sulfolobus solfataricus P2.</title>
        <authorList>
            <person name="Sensen C.W."/>
            <person name="Klenk H.-P."/>
            <person name="Singh R.K."/>
            <person name="Allard G."/>
            <person name="Chan C.C.-Y."/>
            <person name="Liu Q.Y."/>
            <person name="Penny S.L."/>
            <person name="Young F."/>
            <person name="Schenk M.E."/>
            <person name="Gaasterland T."/>
            <person name="Doolittle W.F."/>
            <person name="Ragan M.A."/>
            <person name="Charlebois R.L."/>
        </authorList>
    </citation>
    <scope>NUCLEOTIDE SEQUENCE [GENOMIC DNA]</scope>
    <source>
        <strain>ATCC 35092 / DSM 1617 / JCM 11322 / P2</strain>
    </source>
</reference>
<reference key="2">
    <citation type="journal article" date="2001" name="Proc. Natl. Acad. Sci. U.S.A.">
        <title>The complete genome of the crenarchaeon Sulfolobus solfataricus P2.</title>
        <authorList>
            <person name="She Q."/>
            <person name="Singh R.K."/>
            <person name="Confalonieri F."/>
            <person name="Zivanovic Y."/>
            <person name="Allard G."/>
            <person name="Awayez M.J."/>
            <person name="Chan-Weiher C.C.-Y."/>
            <person name="Clausen I.G."/>
            <person name="Curtis B.A."/>
            <person name="De Moors A."/>
            <person name="Erauso G."/>
            <person name="Fletcher C."/>
            <person name="Gordon P.M.K."/>
            <person name="Heikamp-de Jong I."/>
            <person name="Jeffries A.C."/>
            <person name="Kozera C.J."/>
            <person name="Medina N."/>
            <person name="Peng X."/>
            <person name="Thi-Ngoc H.P."/>
            <person name="Redder P."/>
            <person name="Schenk M.E."/>
            <person name="Theriault C."/>
            <person name="Tolstrup N."/>
            <person name="Charlebois R.L."/>
            <person name="Doolittle W.F."/>
            <person name="Duguet M."/>
            <person name="Gaasterland T."/>
            <person name="Garrett R.A."/>
            <person name="Ragan M.A."/>
            <person name="Sensen C.W."/>
            <person name="Van der Oost J."/>
        </authorList>
    </citation>
    <scope>NUCLEOTIDE SEQUENCE [LARGE SCALE GENOMIC DNA]</scope>
    <source>
        <strain>ATCC 35092 / DSM 1617 / JCM 11322 / P2</strain>
    </source>
</reference>
<keyword id="KW-0444">Lipid biosynthesis</keyword>
<keyword id="KW-0443">Lipid metabolism</keyword>
<keyword id="KW-0460">Magnesium</keyword>
<keyword id="KW-0479">Metal-binding</keyword>
<keyword id="KW-1185">Reference proteome</keyword>
<keyword id="KW-0808">Transferase</keyword>
<comment type="function">
    <text evidence="1">Catalyzes the condensation of isopentenyl pyrophosphate with the allylic pyrophosphates to yield geranylgeranyl diphosphate (GGPP) which is a precursor of the ether-linked lipids.</text>
</comment>
<comment type="catalytic activity">
    <reaction>
        <text>isopentenyl diphosphate + (2E,6E)-farnesyl diphosphate = (2E,6E,10E)-geranylgeranyl diphosphate + diphosphate</text>
        <dbReference type="Rhea" id="RHEA:17653"/>
        <dbReference type="ChEBI" id="CHEBI:33019"/>
        <dbReference type="ChEBI" id="CHEBI:58756"/>
        <dbReference type="ChEBI" id="CHEBI:128769"/>
        <dbReference type="ChEBI" id="CHEBI:175763"/>
        <dbReference type="EC" id="2.5.1.29"/>
    </reaction>
</comment>
<comment type="cofactor">
    <cofactor evidence="1">
        <name>Mg(2+)</name>
        <dbReference type="ChEBI" id="CHEBI:18420"/>
    </cofactor>
    <text evidence="1">Binds 2 Mg(2+) ions per subunit.</text>
</comment>
<comment type="pathway">
    <text>Isoprenoid biosynthesis; geranylgeranyl diphosphate biosynthesis; geranylgeranyl diphosphate from farnesyl diphosphate and isopentenyl diphosphate: step 1/1.</text>
</comment>
<comment type="similarity">
    <text evidence="4">Belongs to the FPP/GGPP synthase family.</text>
</comment>
<dbReference type="EC" id="2.5.1.29"/>
<dbReference type="EMBL" id="Y08257">
    <property type="protein sequence ID" value="CAA69541.1"/>
    <property type="molecule type" value="Genomic_DNA"/>
</dbReference>
<dbReference type="EMBL" id="AE006641">
    <property type="protein sequence ID" value="AAK40423.1"/>
    <property type="molecule type" value="Genomic_DNA"/>
</dbReference>
<dbReference type="PIR" id="H90145">
    <property type="entry name" value="H90145"/>
</dbReference>
<dbReference type="PIR" id="S75427">
    <property type="entry name" value="S75427"/>
</dbReference>
<dbReference type="RefSeq" id="WP_009988863.1">
    <property type="nucleotide sequence ID" value="NC_002754.1"/>
</dbReference>
<dbReference type="SMR" id="P95999"/>
<dbReference type="FunCoup" id="P95999">
    <property type="interactions" value="45"/>
</dbReference>
<dbReference type="STRING" id="273057.SSO0061"/>
<dbReference type="PaxDb" id="273057-SSO0061"/>
<dbReference type="EnsemblBacteria" id="AAK40423">
    <property type="protein sequence ID" value="AAK40423"/>
    <property type="gene ID" value="SSO0061"/>
</dbReference>
<dbReference type="GeneID" id="44129024"/>
<dbReference type="KEGG" id="sso:SSO0061"/>
<dbReference type="PATRIC" id="fig|273057.12.peg.62"/>
<dbReference type="eggNOG" id="arCOG01726">
    <property type="taxonomic scope" value="Archaea"/>
</dbReference>
<dbReference type="HOGENOM" id="CLU_014015_2_1_2"/>
<dbReference type="InParanoid" id="P95999"/>
<dbReference type="PhylomeDB" id="P95999"/>
<dbReference type="UniPathway" id="UPA00389">
    <property type="reaction ID" value="UER00564"/>
</dbReference>
<dbReference type="Proteomes" id="UP000001974">
    <property type="component" value="Chromosome"/>
</dbReference>
<dbReference type="GO" id="GO:0004311">
    <property type="term" value="F:geranylgeranyl diphosphate synthase activity"/>
    <property type="evidence" value="ECO:0007669"/>
    <property type="project" value="UniProtKB-EC"/>
</dbReference>
<dbReference type="GO" id="GO:0046872">
    <property type="term" value="F:metal ion binding"/>
    <property type="evidence" value="ECO:0007669"/>
    <property type="project" value="UniProtKB-KW"/>
</dbReference>
<dbReference type="GO" id="GO:0004659">
    <property type="term" value="F:prenyltransferase activity"/>
    <property type="evidence" value="ECO:0000318"/>
    <property type="project" value="GO_Central"/>
</dbReference>
<dbReference type="GO" id="GO:0033386">
    <property type="term" value="P:geranylgeranyl diphosphate biosynthetic process"/>
    <property type="evidence" value="ECO:0007669"/>
    <property type="project" value="UniProtKB-UniPathway"/>
</dbReference>
<dbReference type="GO" id="GO:0008299">
    <property type="term" value="P:isoprenoid biosynthetic process"/>
    <property type="evidence" value="ECO:0000318"/>
    <property type="project" value="GO_Central"/>
</dbReference>
<dbReference type="CDD" id="cd00685">
    <property type="entry name" value="Trans_IPPS_HT"/>
    <property type="match status" value="1"/>
</dbReference>
<dbReference type="Gene3D" id="1.10.600.10">
    <property type="entry name" value="Farnesyl Diphosphate Synthase"/>
    <property type="match status" value="1"/>
</dbReference>
<dbReference type="InterPro" id="IPR053504">
    <property type="entry name" value="GGPP_synthase"/>
</dbReference>
<dbReference type="InterPro" id="IPR008949">
    <property type="entry name" value="Isoprenoid_synthase_dom_sf"/>
</dbReference>
<dbReference type="InterPro" id="IPR000092">
    <property type="entry name" value="Polyprenyl_synt"/>
</dbReference>
<dbReference type="InterPro" id="IPR033749">
    <property type="entry name" value="Polyprenyl_synt_CS"/>
</dbReference>
<dbReference type="NCBIfam" id="NF041003">
    <property type="entry name" value="GGPP_syn"/>
    <property type="match status" value="1"/>
</dbReference>
<dbReference type="PANTHER" id="PTHR12001">
    <property type="entry name" value="GERANYLGERANYL PYROPHOSPHATE SYNTHASE"/>
    <property type="match status" value="1"/>
</dbReference>
<dbReference type="PANTHER" id="PTHR12001:SF85">
    <property type="entry name" value="SHORT CHAIN ISOPRENYL DIPHOSPHATE SYNTHASE"/>
    <property type="match status" value="1"/>
</dbReference>
<dbReference type="Pfam" id="PF00348">
    <property type="entry name" value="polyprenyl_synt"/>
    <property type="match status" value="1"/>
</dbReference>
<dbReference type="SFLD" id="SFLDS00005">
    <property type="entry name" value="Isoprenoid_Synthase_Type_I"/>
    <property type="match status" value="1"/>
</dbReference>
<dbReference type="SFLD" id="SFLDG01017">
    <property type="entry name" value="Polyprenyl_Transferase_Like"/>
    <property type="match status" value="1"/>
</dbReference>
<dbReference type="SUPFAM" id="SSF48576">
    <property type="entry name" value="Terpenoid synthases"/>
    <property type="match status" value="1"/>
</dbReference>
<dbReference type="PROSITE" id="PS00723">
    <property type="entry name" value="POLYPRENYL_SYNTHASE_1"/>
    <property type="match status" value="1"/>
</dbReference>
<dbReference type="PROSITE" id="PS00444">
    <property type="entry name" value="POLYPRENYL_SYNTHASE_2"/>
    <property type="match status" value="1"/>
</dbReference>
<name>GGPS_SACS2</name>
<proteinExistence type="inferred from homology"/>
<feature type="chain" id="PRO_0000123974" description="Geranylgeranyl diphosphate synthase">
    <location>
        <begin position="1"/>
        <end position="332"/>
    </location>
</feature>
<feature type="binding site" evidence="2">
    <location>
        <position position="45"/>
    </location>
    <ligand>
        <name>isopentenyl diphosphate</name>
        <dbReference type="ChEBI" id="CHEBI:128769"/>
    </ligand>
</feature>
<feature type="binding site" evidence="2">
    <location>
        <position position="48"/>
    </location>
    <ligand>
        <name>isopentenyl diphosphate</name>
        <dbReference type="ChEBI" id="CHEBI:128769"/>
    </ligand>
</feature>
<feature type="binding site" evidence="3">
    <location>
        <position position="77"/>
    </location>
    <ligand>
        <name>isopentenyl diphosphate</name>
        <dbReference type="ChEBI" id="CHEBI:128769"/>
    </ligand>
</feature>
<feature type="binding site" evidence="2">
    <location>
        <position position="84"/>
    </location>
    <ligand>
        <name>Mg(2+)</name>
        <dbReference type="ChEBI" id="CHEBI:18420"/>
        <label>1</label>
    </ligand>
</feature>
<feature type="binding site" evidence="2">
    <location>
        <position position="84"/>
    </location>
    <ligand>
        <name>Mg(2+)</name>
        <dbReference type="ChEBI" id="CHEBI:18420"/>
        <label>2</label>
    </ligand>
</feature>
<feature type="binding site" evidence="2">
    <location>
        <position position="88"/>
    </location>
    <ligand>
        <name>Mg(2+)</name>
        <dbReference type="ChEBI" id="CHEBI:18420"/>
        <label>1</label>
    </ligand>
</feature>
<feature type="binding site" evidence="2">
    <location>
        <position position="88"/>
    </location>
    <ligand>
        <name>Mg(2+)</name>
        <dbReference type="ChEBI" id="CHEBI:18420"/>
        <label>2</label>
    </ligand>
</feature>
<feature type="binding site" evidence="1">
    <location>
        <position position="93"/>
    </location>
    <ligand>
        <name>an all-trans-polyprenyl diphosphate</name>
        <dbReference type="ChEBI" id="CHEBI:58914"/>
    </ligand>
</feature>
<feature type="binding site" evidence="2">
    <location>
        <position position="94"/>
    </location>
    <ligand>
        <name>isopentenyl diphosphate</name>
        <dbReference type="ChEBI" id="CHEBI:128769"/>
    </ligand>
</feature>
<feature type="binding site" evidence="1">
    <location>
        <position position="177"/>
    </location>
    <ligand>
        <name>an all-trans-polyprenyl diphosphate</name>
        <dbReference type="ChEBI" id="CHEBI:58914"/>
    </ligand>
</feature>
<feature type="binding site" evidence="1">
    <location>
        <position position="178"/>
    </location>
    <ligand>
        <name>an all-trans-polyprenyl diphosphate</name>
        <dbReference type="ChEBI" id="CHEBI:58914"/>
    </ligand>
</feature>
<feature type="binding site" evidence="1">
    <location>
        <position position="215"/>
    </location>
    <ligand>
        <name>an all-trans-polyprenyl diphosphate</name>
        <dbReference type="ChEBI" id="CHEBI:58914"/>
    </ligand>
</feature>
<feature type="binding site" evidence="1">
    <location>
        <position position="232"/>
    </location>
    <ligand>
        <name>an all-trans-polyprenyl diphosphate</name>
        <dbReference type="ChEBI" id="CHEBI:58914"/>
    </ligand>
</feature>
<feature type="binding site" evidence="1">
    <location>
        <position position="242"/>
    </location>
    <ligand>
        <name>an all-trans-polyprenyl diphosphate</name>
        <dbReference type="ChEBI" id="CHEBI:58914"/>
    </ligand>
</feature>
<feature type="sequence conflict" description="In Ref. 1; CAA69541." evidence="4" ref="1">
    <original>A</original>
    <variation>S</variation>
    <location>
        <position position="122"/>
    </location>
</feature>
<feature type="sequence conflict" description="In Ref. 1; CAA69541." evidence="4" ref="1">
    <original>A</original>
    <variation>S</variation>
    <location>
        <position position="126"/>
    </location>
</feature>
<accession>P95999</accession>